<dbReference type="EC" id="2.3.1.191" evidence="1"/>
<dbReference type="EMBL" id="CP001037">
    <property type="protein sequence ID" value="ACC82800.1"/>
    <property type="molecule type" value="Genomic_DNA"/>
</dbReference>
<dbReference type="RefSeq" id="WP_012410761.1">
    <property type="nucleotide sequence ID" value="NC_010628.1"/>
</dbReference>
<dbReference type="SMR" id="B2IUM5"/>
<dbReference type="STRING" id="63737.Npun_F4432"/>
<dbReference type="EnsemblBacteria" id="ACC82800">
    <property type="protein sequence ID" value="ACC82800"/>
    <property type="gene ID" value="Npun_F4432"/>
</dbReference>
<dbReference type="KEGG" id="npu:Npun_F4432"/>
<dbReference type="eggNOG" id="COG1044">
    <property type="taxonomic scope" value="Bacteria"/>
</dbReference>
<dbReference type="HOGENOM" id="CLU_049865_0_0_3"/>
<dbReference type="OrthoDB" id="9784739at2"/>
<dbReference type="PhylomeDB" id="B2IUM5"/>
<dbReference type="UniPathway" id="UPA00973"/>
<dbReference type="Proteomes" id="UP000001191">
    <property type="component" value="Chromosome"/>
</dbReference>
<dbReference type="GO" id="GO:0031470">
    <property type="term" value="C:carboxysome"/>
    <property type="evidence" value="ECO:0007669"/>
    <property type="project" value="UniProtKB-ARBA"/>
</dbReference>
<dbReference type="GO" id="GO:0016020">
    <property type="term" value="C:membrane"/>
    <property type="evidence" value="ECO:0007669"/>
    <property type="project" value="GOC"/>
</dbReference>
<dbReference type="GO" id="GO:0016410">
    <property type="term" value="F:N-acyltransferase activity"/>
    <property type="evidence" value="ECO:0007669"/>
    <property type="project" value="InterPro"/>
</dbReference>
<dbReference type="GO" id="GO:0043886">
    <property type="term" value="F:structural constituent of carboxysome shell"/>
    <property type="evidence" value="ECO:0007669"/>
    <property type="project" value="UniProtKB-ARBA"/>
</dbReference>
<dbReference type="GO" id="GO:0009245">
    <property type="term" value="P:lipid A biosynthetic process"/>
    <property type="evidence" value="ECO:0007669"/>
    <property type="project" value="UniProtKB-UniRule"/>
</dbReference>
<dbReference type="CDD" id="cd03352">
    <property type="entry name" value="LbH_LpxD"/>
    <property type="match status" value="1"/>
</dbReference>
<dbReference type="Gene3D" id="2.160.10.10">
    <property type="entry name" value="Hexapeptide repeat proteins"/>
    <property type="match status" value="1"/>
</dbReference>
<dbReference type="Gene3D" id="3.40.1390.10">
    <property type="entry name" value="MurE/MurF, N-terminal domain"/>
    <property type="match status" value="1"/>
</dbReference>
<dbReference type="HAMAP" id="MF_00523">
    <property type="entry name" value="LpxD"/>
    <property type="match status" value="1"/>
</dbReference>
<dbReference type="InterPro" id="IPR001451">
    <property type="entry name" value="Hexapep"/>
</dbReference>
<dbReference type="InterPro" id="IPR007691">
    <property type="entry name" value="LpxD"/>
</dbReference>
<dbReference type="InterPro" id="IPR011004">
    <property type="entry name" value="Trimer_LpxA-like_sf"/>
</dbReference>
<dbReference type="InterPro" id="IPR020573">
    <property type="entry name" value="UDP_GlcNAc_AcTrfase_non-rep"/>
</dbReference>
<dbReference type="NCBIfam" id="TIGR01853">
    <property type="entry name" value="lipid_A_lpxD"/>
    <property type="match status" value="1"/>
</dbReference>
<dbReference type="NCBIfam" id="NF002060">
    <property type="entry name" value="PRK00892.1"/>
    <property type="match status" value="1"/>
</dbReference>
<dbReference type="PANTHER" id="PTHR43378">
    <property type="entry name" value="UDP-3-O-ACYLGLUCOSAMINE N-ACYLTRANSFERASE"/>
    <property type="match status" value="1"/>
</dbReference>
<dbReference type="PANTHER" id="PTHR43378:SF2">
    <property type="entry name" value="UDP-3-O-ACYLGLUCOSAMINE N-ACYLTRANSFERASE 1, MITOCHONDRIAL-RELATED"/>
    <property type="match status" value="1"/>
</dbReference>
<dbReference type="Pfam" id="PF00132">
    <property type="entry name" value="Hexapep"/>
    <property type="match status" value="2"/>
</dbReference>
<dbReference type="Pfam" id="PF04613">
    <property type="entry name" value="LpxD"/>
    <property type="match status" value="1"/>
</dbReference>
<dbReference type="SUPFAM" id="SSF51161">
    <property type="entry name" value="Trimeric LpxA-like enzymes"/>
    <property type="match status" value="1"/>
</dbReference>
<protein>
    <recommendedName>
        <fullName evidence="1">UDP-3-O-acylglucosamine N-acyltransferase</fullName>
        <ecNumber evidence="1">2.3.1.191</ecNumber>
    </recommendedName>
</protein>
<evidence type="ECO:0000255" key="1">
    <source>
        <dbReference type="HAMAP-Rule" id="MF_00523"/>
    </source>
</evidence>
<feature type="chain" id="PRO_1000127689" description="UDP-3-O-acylglucosamine N-acyltransferase">
    <location>
        <begin position="1"/>
        <end position="350"/>
    </location>
</feature>
<feature type="active site" description="Proton acceptor" evidence="1">
    <location>
        <position position="248"/>
    </location>
</feature>
<reference key="1">
    <citation type="journal article" date="2013" name="Plant Physiol.">
        <title>A Nostoc punctiforme Sugar Transporter Necessary to Establish a Cyanobacterium-Plant Symbiosis.</title>
        <authorList>
            <person name="Ekman M."/>
            <person name="Picossi S."/>
            <person name="Campbell E.L."/>
            <person name="Meeks J.C."/>
            <person name="Flores E."/>
        </authorList>
    </citation>
    <scope>NUCLEOTIDE SEQUENCE [LARGE SCALE GENOMIC DNA]</scope>
    <source>
        <strain>ATCC 29133 / PCC 73102</strain>
    </source>
</reference>
<comment type="function">
    <text evidence="1">Catalyzes the N-acylation of UDP-3-O-acylglucosamine using 3-hydroxyacyl-ACP as the acyl donor. Is involved in the biosynthesis of lipid A, a phosphorylated glycolipid that anchors the lipopolysaccharide to the outer membrane of the cell.</text>
</comment>
<comment type="catalytic activity">
    <reaction evidence="1">
        <text>a UDP-3-O-[(3R)-3-hydroxyacyl]-alpha-D-glucosamine + a (3R)-hydroxyacyl-[ACP] = a UDP-2-N,3-O-bis[(3R)-3-hydroxyacyl]-alpha-D-glucosamine + holo-[ACP] + H(+)</text>
        <dbReference type="Rhea" id="RHEA:53836"/>
        <dbReference type="Rhea" id="RHEA-COMP:9685"/>
        <dbReference type="Rhea" id="RHEA-COMP:9945"/>
        <dbReference type="ChEBI" id="CHEBI:15378"/>
        <dbReference type="ChEBI" id="CHEBI:64479"/>
        <dbReference type="ChEBI" id="CHEBI:78827"/>
        <dbReference type="ChEBI" id="CHEBI:137740"/>
        <dbReference type="ChEBI" id="CHEBI:137748"/>
        <dbReference type="EC" id="2.3.1.191"/>
    </reaction>
</comment>
<comment type="pathway">
    <text evidence="1">Bacterial outer membrane biogenesis; LPS lipid A biosynthesis.</text>
</comment>
<comment type="subunit">
    <text evidence="1">Homotrimer.</text>
</comment>
<comment type="similarity">
    <text evidence="1">Belongs to the transferase hexapeptide repeat family. LpxD subfamily.</text>
</comment>
<accession>B2IUM5</accession>
<name>LPXD_NOSP7</name>
<gene>
    <name evidence="1" type="primary">lpxD</name>
    <name type="ordered locus">Npun_F4432</name>
</gene>
<sequence>MKFSEIISQFGETGTNHSLTSNPDHDPEIIGVAAIDEATNGTLSYVEGPKFGSFVSKTNATALILPQDEKLQELAQENGIVWISTSDPRLLFAKAIALFYQPYRPVPEIHPTAVIHSSAKVGSDVYVGPHVVIQQGVEIGDGAIIHPNVVIYPDTKIGDRTTLHANCTIHERTRIGADCVIHSGAVIGAEGFGFVPSRTGWLKMEQSGYTVLEDGVVVGCNTAIDRPAVGETRVGRNTVIDNLVQIGHGCQIGSGCAIAGQAGMAGGVKLGNRVILAGQTGIANQVKIGDGAIASAQTGIHSDVAPGEIVSGTPAIPYKLYLKVCAVYSRLPDMYQSLKQLQRKFKNSND</sequence>
<keyword id="KW-0012">Acyltransferase</keyword>
<keyword id="KW-0441">Lipid A biosynthesis</keyword>
<keyword id="KW-0444">Lipid biosynthesis</keyword>
<keyword id="KW-0443">Lipid metabolism</keyword>
<keyword id="KW-1185">Reference proteome</keyword>
<keyword id="KW-0677">Repeat</keyword>
<keyword id="KW-0808">Transferase</keyword>
<proteinExistence type="inferred from homology"/>
<organism>
    <name type="scientific">Nostoc punctiforme (strain ATCC 29133 / PCC 73102)</name>
    <dbReference type="NCBI Taxonomy" id="63737"/>
    <lineage>
        <taxon>Bacteria</taxon>
        <taxon>Bacillati</taxon>
        <taxon>Cyanobacteriota</taxon>
        <taxon>Cyanophyceae</taxon>
        <taxon>Nostocales</taxon>
        <taxon>Nostocaceae</taxon>
        <taxon>Nostoc</taxon>
    </lineage>
</organism>